<accession>P20498</accession>
<feature type="chain" id="PRO_0000099558" description="Telomere-binding protein OPG077">
    <location>
        <begin position="1"/>
        <end position="312"/>
    </location>
</feature>
<evidence type="ECO:0000250" key="1">
    <source>
        <dbReference type="UniProtKB" id="P16714"/>
    </source>
</evidence>
<evidence type="ECO:0000305" key="2"/>
<protein>
    <recommendedName>
        <fullName>Telomere-binding protein OPG077</fullName>
    </recommendedName>
    <alternativeName>
        <fullName>Telomere-binding protein I1</fullName>
    </alternativeName>
</protein>
<sequence length="312" mass="35841">MAEFEDQLVFNSISARALKAYFTAKINEMVDELVTRKCPQKKKSQAKKPEVRIPVDLVKSSFVKKFGLCNYGGILISLINSLVENNFFTKDGKLDDTGKKELVLTDVEKRILNTIDKSSPLYIDISDVKVLAARLKRSATQFNFNGHTYHLENDKIEDLINQLVKDESIQLDEKSSIKDSMYVIPDELIDVLKTRLFRSPQVKDNIISRTRLYDYFTRVTKRDESSIYVILKDPRIASILSLETVKMGAFMYTKHSMLTNAISSRVDRYSKKFQESFYEDIAEFVKENERVNVSRVVECLTVPNITISSNAE</sequence>
<reference key="1">
    <citation type="journal article" date="1990" name="Virology">
        <title>The complete DNA sequence of vaccinia virus.</title>
        <authorList>
            <person name="Goebel S.J."/>
            <person name="Johnson G.P."/>
            <person name="Perkus M.E."/>
            <person name="Davis S.W."/>
            <person name="Winslow J.P."/>
            <person name="Paoletti E."/>
        </authorList>
    </citation>
    <scope>NUCLEOTIDE SEQUENCE [LARGE SCALE GENOMIC DNA]</scope>
</reference>
<reference key="2">
    <citation type="journal article" date="1990" name="Virology">
        <title>Appendix to 'The complete DNA sequence of vaccinia virus'.</title>
        <authorList>
            <person name="Goebel S.J."/>
            <person name="Johnson G.P."/>
            <person name="Perkus M.E."/>
            <person name="Davis S.W."/>
            <person name="Winslow J.P."/>
            <person name="Paoletti E."/>
        </authorList>
    </citation>
    <scope>NUCLEOTIDE SEQUENCE [LARGE SCALE GENOMIC DNA]</scope>
</reference>
<keyword id="KW-0238">DNA-binding</keyword>
<keyword id="KW-1185">Reference proteome</keyword>
<keyword id="KW-0946">Virion</keyword>
<dbReference type="EMBL" id="M35027">
    <property type="protein sequence ID" value="AAA48056.1"/>
    <property type="molecule type" value="Genomic_DNA"/>
</dbReference>
<dbReference type="PIR" id="F42510">
    <property type="entry name" value="F42510"/>
</dbReference>
<dbReference type="SMR" id="P20498"/>
<dbReference type="Proteomes" id="UP000008269">
    <property type="component" value="Segment"/>
</dbReference>
<dbReference type="GO" id="GO:0044423">
    <property type="term" value="C:virion component"/>
    <property type="evidence" value="ECO:0007669"/>
    <property type="project" value="UniProtKB-KW"/>
</dbReference>
<dbReference type="GO" id="GO:0003677">
    <property type="term" value="F:DNA binding"/>
    <property type="evidence" value="ECO:0007669"/>
    <property type="project" value="UniProtKB-KW"/>
</dbReference>
<dbReference type="InterPro" id="IPR004969">
    <property type="entry name" value="Poxvirus_I1"/>
</dbReference>
<dbReference type="Pfam" id="PF03289">
    <property type="entry name" value="Pox_I1"/>
    <property type="match status" value="1"/>
</dbReference>
<dbReference type="PIRSF" id="PIRSF015625">
    <property type="entry name" value="VAC_I1L"/>
    <property type="match status" value="1"/>
</dbReference>
<name>PG077_VACCC</name>
<proteinExistence type="evidence at transcript level"/>
<comment type="function">
    <text evidence="1">DNA-binding protein which binds to the hairpin form of the viral telomeric sequence. Required for the production of mature virions (MV).</text>
</comment>
<comment type="subcellular location">
    <subcellularLocation>
        <location evidence="1">Virion</location>
    </subcellularLocation>
    <text evidence="1">Present in the virus core.</text>
</comment>
<comment type="induction">
    <text>Expressed in the late phase of the viral replicative cycle.</text>
</comment>
<comment type="miscellaneous">
    <text evidence="1">Each virion contains approximately 670 molecules of OPG077.</text>
</comment>
<comment type="similarity">
    <text evidence="2">Belongs to the orthopoxvirus OPG077 family.</text>
</comment>
<organism>
    <name type="scientific">Vaccinia virus (strain Copenhagen)</name>
    <name type="common">VACV</name>
    <dbReference type="NCBI Taxonomy" id="10249"/>
    <lineage>
        <taxon>Viruses</taxon>
        <taxon>Varidnaviria</taxon>
        <taxon>Bamfordvirae</taxon>
        <taxon>Nucleocytoviricota</taxon>
        <taxon>Pokkesviricetes</taxon>
        <taxon>Chitovirales</taxon>
        <taxon>Poxviridae</taxon>
        <taxon>Chordopoxvirinae</taxon>
        <taxon>Orthopoxvirus</taxon>
        <taxon>Vaccinia virus</taxon>
    </lineage>
</organism>
<gene>
    <name type="primary">OPG077</name>
    <name type="ORF">I1L</name>
</gene>
<organismHost>
    <name type="scientific">Homo sapiens</name>
    <name type="common">Human</name>
    <dbReference type="NCBI Taxonomy" id="9606"/>
</organismHost>